<keyword id="KW-0975">Bacterial flagellum</keyword>
<organism>
    <name type="scientific">Brucella suis biovar 1 (strain 1330)</name>
    <dbReference type="NCBI Taxonomy" id="204722"/>
    <lineage>
        <taxon>Bacteria</taxon>
        <taxon>Pseudomonadati</taxon>
        <taxon>Pseudomonadota</taxon>
        <taxon>Alphaproteobacteria</taxon>
        <taxon>Hyphomicrobiales</taxon>
        <taxon>Brucellaceae</taxon>
        <taxon>Brucella/Ochrobactrum group</taxon>
        <taxon>Brucella</taxon>
    </lineage>
</organism>
<dbReference type="EMBL" id="AE014292">
    <property type="protein sequence ID" value="AAN33360.1"/>
    <property type="molecule type" value="Genomic_DNA"/>
</dbReference>
<dbReference type="EMBL" id="CP002998">
    <property type="protein sequence ID" value="AEM19639.1"/>
    <property type="molecule type" value="Genomic_DNA"/>
</dbReference>
<dbReference type="RefSeq" id="WP_002966429.1">
    <property type="nucleotide sequence ID" value="NZ_KN046805.1"/>
</dbReference>
<dbReference type="SMR" id="P67707"/>
<dbReference type="KEGG" id="bms:BRA0153"/>
<dbReference type="KEGG" id="bsi:BS1330_II0152"/>
<dbReference type="PATRIC" id="fig|204722.21.peg.3359"/>
<dbReference type="HOGENOM" id="CLU_147249_2_0_5"/>
<dbReference type="PhylomeDB" id="P67707"/>
<dbReference type="Proteomes" id="UP000007104">
    <property type="component" value="Chromosome II"/>
</dbReference>
<dbReference type="GO" id="GO:0009425">
    <property type="term" value="C:bacterial-type flagellum basal body"/>
    <property type="evidence" value="ECO:0007669"/>
    <property type="project" value="UniProtKB-SubCell"/>
</dbReference>
<dbReference type="GO" id="GO:0003774">
    <property type="term" value="F:cytoskeletal motor activity"/>
    <property type="evidence" value="ECO:0007669"/>
    <property type="project" value="InterPro"/>
</dbReference>
<dbReference type="GO" id="GO:0005198">
    <property type="term" value="F:structural molecule activity"/>
    <property type="evidence" value="ECO:0007669"/>
    <property type="project" value="InterPro"/>
</dbReference>
<dbReference type="GO" id="GO:0071973">
    <property type="term" value="P:bacterial-type flagellum-dependent cell motility"/>
    <property type="evidence" value="ECO:0007669"/>
    <property type="project" value="InterPro"/>
</dbReference>
<dbReference type="HAMAP" id="MF_00724">
    <property type="entry name" value="FliE"/>
    <property type="match status" value="1"/>
</dbReference>
<dbReference type="InterPro" id="IPR001624">
    <property type="entry name" value="FliE"/>
</dbReference>
<dbReference type="PANTHER" id="PTHR34653">
    <property type="match status" value="1"/>
</dbReference>
<dbReference type="PANTHER" id="PTHR34653:SF1">
    <property type="entry name" value="FLAGELLAR HOOK-BASAL BODY COMPLEX PROTEIN FLIE"/>
    <property type="match status" value="1"/>
</dbReference>
<dbReference type="Pfam" id="PF02049">
    <property type="entry name" value="FliE"/>
    <property type="match status" value="1"/>
</dbReference>
<dbReference type="PRINTS" id="PR01006">
    <property type="entry name" value="FLGHOOKFLIE"/>
</dbReference>
<feature type="chain" id="PRO_0000105534" description="Flagellar hook-basal body complex protein FliE">
    <location>
        <begin position="1"/>
        <end position="111"/>
    </location>
</feature>
<sequence length="111" mass="11510">MYDSIMSVSARNALSRLSETVAEKGVGSASAPQAVPAAPGASFGEVLSQMTGSVSQKLQAAEATSIQGIKGDAPVRDVVSSVMEAEQSLQTAIAIRDKIVQAYLEISRMPI</sequence>
<accession>P67707</accession>
<accession>G0KEZ5</accession>
<accession>Q8FXC7</accession>
<accession>Q8YB14</accession>
<name>FLIE_BRUSU</name>
<proteinExistence type="inferred from homology"/>
<evidence type="ECO:0000255" key="1">
    <source>
        <dbReference type="HAMAP-Rule" id="MF_00724"/>
    </source>
</evidence>
<evidence type="ECO:0000305" key="2"/>
<comment type="subcellular location">
    <subcellularLocation>
        <location evidence="1">Bacterial flagellum basal body</location>
    </subcellularLocation>
</comment>
<comment type="similarity">
    <text evidence="1">Belongs to the FliE family.</text>
</comment>
<comment type="caution">
    <text evidence="2">Brucella species display species-specific inactivation of flagellar genes and are consequently nonmotile.</text>
</comment>
<reference key="1">
    <citation type="journal article" date="2002" name="Proc. Natl. Acad. Sci. U.S.A.">
        <title>The Brucella suis genome reveals fundamental similarities between animal and plant pathogens and symbionts.</title>
        <authorList>
            <person name="Paulsen I.T."/>
            <person name="Seshadri R."/>
            <person name="Nelson K.E."/>
            <person name="Eisen J.A."/>
            <person name="Heidelberg J.F."/>
            <person name="Read T.D."/>
            <person name="Dodson R.J."/>
            <person name="Umayam L.A."/>
            <person name="Brinkac L.M."/>
            <person name="Beanan M.J."/>
            <person name="Daugherty S.C."/>
            <person name="DeBoy R.T."/>
            <person name="Durkin A.S."/>
            <person name="Kolonay J.F."/>
            <person name="Madupu R."/>
            <person name="Nelson W.C."/>
            <person name="Ayodeji B."/>
            <person name="Kraul M."/>
            <person name="Shetty J."/>
            <person name="Malek J.A."/>
            <person name="Van Aken S.E."/>
            <person name="Riedmuller S."/>
            <person name="Tettelin H."/>
            <person name="Gill S.R."/>
            <person name="White O."/>
            <person name="Salzberg S.L."/>
            <person name="Hoover D.L."/>
            <person name="Lindler L.E."/>
            <person name="Halling S.M."/>
            <person name="Boyle S.M."/>
            <person name="Fraser C.M."/>
        </authorList>
    </citation>
    <scope>NUCLEOTIDE SEQUENCE [LARGE SCALE GENOMIC DNA]</scope>
    <source>
        <strain>1330</strain>
    </source>
</reference>
<reference key="2">
    <citation type="journal article" date="2011" name="J. Bacteriol.">
        <title>Revised genome sequence of Brucella suis 1330.</title>
        <authorList>
            <person name="Tae H."/>
            <person name="Shallom S."/>
            <person name="Settlage R."/>
            <person name="Preston D."/>
            <person name="Adams L.G."/>
            <person name="Garner H.R."/>
        </authorList>
    </citation>
    <scope>NUCLEOTIDE SEQUENCE [LARGE SCALE GENOMIC DNA]</scope>
    <source>
        <strain>1330</strain>
    </source>
</reference>
<gene>
    <name evidence="1" type="primary">fliE</name>
    <name type="ordered locus">BRA0153</name>
    <name type="ordered locus">BS1330_II0152</name>
</gene>
<protein>
    <recommendedName>
        <fullName evidence="1">Flagellar hook-basal body complex protein FliE</fullName>
    </recommendedName>
</protein>